<accession>A9MTF1</accession>
<reference key="1">
    <citation type="submission" date="2007-11" db="EMBL/GenBank/DDBJ databases">
        <authorList>
            <consortium name="The Salmonella enterica serovar Paratyphi B Genome Sequencing Project"/>
            <person name="McClelland M."/>
            <person name="Sanderson E.K."/>
            <person name="Porwollik S."/>
            <person name="Spieth J."/>
            <person name="Clifton W.S."/>
            <person name="Fulton R."/>
            <person name="Cordes M."/>
            <person name="Wollam A."/>
            <person name="Shah N."/>
            <person name="Pepin K."/>
            <person name="Bhonagiri V."/>
            <person name="Nash W."/>
            <person name="Johnson M."/>
            <person name="Thiruvilangam P."/>
            <person name="Wilson R."/>
        </authorList>
    </citation>
    <scope>NUCLEOTIDE SEQUENCE [LARGE SCALE GENOMIC DNA]</scope>
    <source>
        <strain>ATCC BAA-1250 / SPB7</strain>
    </source>
</reference>
<protein>
    <recommendedName>
        <fullName evidence="1">Mlc titration factor A</fullName>
    </recommendedName>
    <alternativeName>
        <fullName evidence="1">Probable zinc metallopeptidase MtfA</fullName>
        <ecNumber evidence="1">3.4.11.-</ecNumber>
    </alternativeName>
</protein>
<evidence type="ECO:0000255" key="1">
    <source>
        <dbReference type="HAMAP-Rule" id="MF_01593"/>
    </source>
</evidence>
<keyword id="KW-0031">Aminopeptidase</keyword>
<keyword id="KW-0963">Cytoplasm</keyword>
<keyword id="KW-0378">Hydrolase</keyword>
<keyword id="KW-0479">Metal-binding</keyword>
<keyword id="KW-0482">Metalloprotease</keyword>
<keyword id="KW-0645">Protease</keyword>
<keyword id="KW-0862">Zinc</keyword>
<name>MTFA_SALPB</name>
<sequence>MIKWPWKAQEITQNEDWPWDDALAIPLLVNLTAQEQARLIALAERFLQQKRLVALQGFELDSLKSARIALIFCLPILELGIEWLDGFHEVLIYPAPFVVDDEWEDDIGLVHSQRVVQSGQSWQQGPIILNWLDIQDSFDASGFNLIIHEVAHKLDMRNGDRASGIPFIPLRDVAGWEHDLHAAMNNIQDEIDLVGESAASIDAYAATDPAECFAVLSEYFFSAPELFAPRFPALWQRFCQFYRQDPSQRLRVSAAEGDYGEESEH</sequence>
<dbReference type="EC" id="3.4.11.-" evidence="1"/>
<dbReference type="EMBL" id="CP000886">
    <property type="protein sequence ID" value="ABX66557.1"/>
    <property type="molecule type" value="Genomic_DNA"/>
</dbReference>
<dbReference type="RefSeq" id="WP_000598920.1">
    <property type="nucleotide sequence ID" value="NC_010102.1"/>
</dbReference>
<dbReference type="SMR" id="A9MTF1"/>
<dbReference type="MEROPS" id="M90.001"/>
<dbReference type="KEGG" id="spq:SPAB_01140"/>
<dbReference type="PATRIC" id="fig|1016998.12.peg.1076"/>
<dbReference type="HOGENOM" id="CLU_063037_2_0_6"/>
<dbReference type="BioCyc" id="SENT1016998:SPAB_RS04745-MONOMER"/>
<dbReference type="Proteomes" id="UP000008556">
    <property type="component" value="Chromosome"/>
</dbReference>
<dbReference type="GO" id="GO:0005829">
    <property type="term" value="C:cytosol"/>
    <property type="evidence" value="ECO:0007669"/>
    <property type="project" value="TreeGrafter"/>
</dbReference>
<dbReference type="GO" id="GO:0004177">
    <property type="term" value="F:aminopeptidase activity"/>
    <property type="evidence" value="ECO:0007669"/>
    <property type="project" value="UniProtKB-UniRule"/>
</dbReference>
<dbReference type="GO" id="GO:0008237">
    <property type="term" value="F:metallopeptidase activity"/>
    <property type="evidence" value="ECO:0007669"/>
    <property type="project" value="UniProtKB-UniRule"/>
</dbReference>
<dbReference type="GO" id="GO:0008270">
    <property type="term" value="F:zinc ion binding"/>
    <property type="evidence" value="ECO:0007669"/>
    <property type="project" value="UniProtKB-UniRule"/>
</dbReference>
<dbReference type="GO" id="GO:0006508">
    <property type="term" value="P:proteolysis"/>
    <property type="evidence" value="ECO:0007669"/>
    <property type="project" value="UniProtKB-KW"/>
</dbReference>
<dbReference type="CDD" id="cd20169">
    <property type="entry name" value="Peptidase_M90_mtfA"/>
    <property type="match status" value="1"/>
</dbReference>
<dbReference type="FunFam" id="1.10.472.150:FF:000001">
    <property type="entry name" value="Protein MtfA"/>
    <property type="match status" value="1"/>
</dbReference>
<dbReference type="FunFam" id="3.40.390.10:FF:000012">
    <property type="entry name" value="Protein MtfA"/>
    <property type="match status" value="1"/>
</dbReference>
<dbReference type="Gene3D" id="3.40.390.10">
    <property type="entry name" value="Collagenase (Catalytic Domain)"/>
    <property type="match status" value="1"/>
</dbReference>
<dbReference type="Gene3D" id="1.10.472.150">
    <property type="entry name" value="Glucose-regulated metallo-peptidase M90, N-terminal domain"/>
    <property type="match status" value="1"/>
</dbReference>
<dbReference type="HAMAP" id="MF_01593">
    <property type="entry name" value="MtfA"/>
    <property type="match status" value="1"/>
</dbReference>
<dbReference type="InterPro" id="IPR024079">
    <property type="entry name" value="MetalloPept_cat_dom_sf"/>
</dbReference>
<dbReference type="InterPro" id="IPR057256">
    <property type="entry name" value="MtfA_enterob"/>
</dbReference>
<dbReference type="InterPro" id="IPR010384">
    <property type="entry name" value="MtfA_fam"/>
</dbReference>
<dbReference type="InterPro" id="IPR042252">
    <property type="entry name" value="MtfA_N"/>
</dbReference>
<dbReference type="NCBIfam" id="NF011939">
    <property type="entry name" value="PRK15410.1"/>
    <property type="match status" value="1"/>
</dbReference>
<dbReference type="PANTHER" id="PTHR30164">
    <property type="entry name" value="MTFA PEPTIDASE"/>
    <property type="match status" value="1"/>
</dbReference>
<dbReference type="PANTHER" id="PTHR30164:SF2">
    <property type="entry name" value="PROTEIN MTFA"/>
    <property type="match status" value="1"/>
</dbReference>
<dbReference type="Pfam" id="PF06167">
    <property type="entry name" value="Peptidase_M90"/>
    <property type="match status" value="1"/>
</dbReference>
<dbReference type="SUPFAM" id="SSF55486">
    <property type="entry name" value="Metalloproteases ('zincins'), catalytic domain"/>
    <property type="match status" value="1"/>
</dbReference>
<feature type="chain" id="PRO_1000087980" description="Mlc titration factor A">
    <location>
        <begin position="1"/>
        <end position="265"/>
    </location>
</feature>
<feature type="binding site" evidence="1">
    <location>
        <position position="111"/>
    </location>
    <ligand>
        <name>Zn(2+)</name>
        <dbReference type="ChEBI" id="CHEBI:29105"/>
    </ligand>
</feature>
<feature type="binding site" evidence="1">
    <location>
        <position position="148"/>
    </location>
    <ligand>
        <name>Zn(2+)</name>
        <dbReference type="ChEBI" id="CHEBI:29105"/>
    </ligand>
</feature>
<feature type="binding site" evidence="1">
    <location>
        <position position="152"/>
    </location>
    <ligand>
        <name>Zn(2+)</name>
        <dbReference type="ChEBI" id="CHEBI:29105"/>
    </ligand>
</feature>
<feature type="binding site" evidence="1">
    <location>
        <position position="211"/>
    </location>
    <ligand>
        <name>Zn(2+)</name>
        <dbReference type="ChEBI" id="CHEBI:29105"/>
    </ligand>
</feature>
<proteinExistence type="inferred from homology"/>
<organism>
    <name type="scientific">Salmonella paratyphi B (strain ATCC BAA-1250 / SPB7)</name>
    <dbReference type="NCBI Taxonomy" id="1016998"/>
    <lineage>
        <taxon>Bacteria</taxon>
        <taxon>Pseudomonadati</taxon>
        <taxon>Pseudomonadota</taxon>
        <taxon>Gammaproteobacteria</taxon>
        <taxon>Enterobacterales</taxon>
        <taxon>Enterobacteriaceae</taxon>
        <taxon>Salmonella</taxon>
    </lineage>
</organism>
<gene>
    <name evidence="1" type="primary">mtfA</name>
    <name type="ordered locus">SPAB_01140</name>
</gene>
<comment type="function">
    <text evidence="1">Involved in the modulation of the activity of the glucose-phosphotransferase system (glucose-PTS). Interacts with the transcriptional repressor Mlc, preventing its interaction with DNA and leading to the modulation of expression of genes regulated by Mlc, including ptsG, which encodes the PTS system glucose-specific EIICB component.</text>
</comment>
<comment type="function">
    <text evidence="1">Shows zinc-dependent metallopeptidase activity.</text>
</comment>
<comment type="cofactor">
    <cofactor evidence="1">
        <name>Zn(2+)</name>
        <dbReference type="ChEBI" id="CHEBI:29105"/>
    </cofactor>
    <text evidence="1">Binds 1 zinc ion per subunit.</text>
</comment>
<comment type="subunit">
    <text evidence="1">Interacts with Mlc.</text>
</comment>
<comment type="subcellular location">
    <subcellularLocation>
        <location evidence="1">Cytoplasm</location>
    </subcellularLocation>
</comment>
<comment type="similarity">
    <text evidence="1">Belongs to the MtfA family.</text>
</comment>